<evidence type="ECO:0000255" key="1">
    <source>
        <dbReference type="HAMAP-Rule" id="MF_00607"/>
    </source>
</evidence>
<evidence type="ECO:0007829" key="2">
    <source>
        <dbReference type="PDB" id="3TQS"/>
    </source>
</evidence>
<gene>
    <name evidence="1" type="primary">rsmA</name>
    <name evidence="1" type="synonym">ksgA</name>
    <name type="ordered locus">CBU_1982</name>
</gene>
<dbReference type="EC" id="2.1.1.182" evidence="1"/>
<dbReference type="EMBL" id="AE016828">
    <property type="protein sequence ID" value="AAO91471.2"/>
    <property type="molecule type" value="Genomic_DNA"/>
</dbReference>
<dbReference type="RefSeq" id="NP_820957.2">
    <property type="nucleotide sequence ID" value="NC_002971.3"/>
</dbReference>
<dbReference type="RefSeq" id="WP_005772431.1">
    <property type="nucleotide sequence ID" value="NZ_CCYB01000065.1"/>
</dbReference>
<dbReference type="PDB" id="3TQS">
    <property type="method" value="X-ray"/>
    <property type="resolution" value="1.98 A"/>
    <property type="chains" value="A/B/C/D=4-258"/>
</dbReference>
<dbReference type="PDBsum" id="3TQS"/>
<dbReference type="SMR" id="Q83AC2"/>
<dbReference type="STRING" id="227377.CBU_1982"/>
<dbReference type="EnsemblBacteria" id="AAO91471">
    <property type="protein sequence ID" value="AAO91471"/>
    <property type="gene ID" value="CBU_1982"/>
</dbReference>
<dbReference type="GeneID" id="1209895"/>
<dbReference type="KEGG" id="cbu:CBU_1982"/>
<dbReference type="PATRIC" id="fig|227377.7.peg.1969"/>
<dbReference type="eggNOG" id="COG0030">
    <property type="taxonomic scope" value="Bacteria"/>
</dbReference>
<dbReference type="HOGENOM" id="CLU_041220_0_1_6"/>
<dbReference type="OrthoDB" id="9814755at2"/>
<dbReference type="EvolutionaryTrace" id="Q83AC2"/>
<dbReference type="Proteomes" id="UP000002671">
    <property type="component" value="Chromosome"/>
</dbReference>
<dbReference type="GO" id="GO:0005829">
    <property type="term" value="C:cytosol"/>
    <property type="evidence" value="ECO:0000318"/>
    <property type="project" value="GO_Central"/>
</dbReference>
<dbReference type="GO" id="GO:0052908">
    <property type="term" value="F:16S rRNA (adenine(1518)-N(6)/adenine(1519)-N(6))-dimethyltransferase activity"/>
    <property type="evidence" value="ECO:0007669"/>
    <property type="project" value="UniProtKB-EC"/>
</dbReference>
<dbReference type="GO" id="GO:0003723">
    <property type="term" value="F:RNA binding"/>
    <property type="evidence" value="ECO:0007669"/>
    <property type="project" value="UniProtKB-KW"/>
</dbReference>
<dbReference type="GO" id="GO:0000179">
    <property type="term" value="F:rRNA (adenine-N6,N6-)-dimethyltransferase activity"/>
    <property type="evidence" value="ECO:0000318"/>
    <property type="project" value="GO_Central"/>
</dbReference>
<dbReference type="GO" id="GO:0031167">
    <property type="term" value="P:rRNA methylation"/>
    <property type="evidence" value="ECO:0000318"/>
    <property type="project" value="GO_Central"/>
</dbReference>
<dbReference type="FunFam" id="1.10.8.100:FF:000003">
    <property type="entry name" value="Ribosomal RNA small subunit methyltransferase A"/>
    <property type="match status" value="1"/>
</dbReference>
<dbReference type="FunFam" id="3.40.50.150:FF:000006">
    <property type="entry name" value="Ribosomal RNA small subunit methyltransferase A"/>
    <property type="match status" value="1"/>
</dbReference>
<dbReference type="Gene3D" id="1.10.8.100">
    <property type="entry name" value="Ribosomal RNA adenine dimethylase-like, domain 2"/>
    <property type="match status" value="1"/>
</dbReference>
<dbReference type="Gene3D" id="3.40.50.150">
    <property type="entry name" value="Vaccinia Virus protein VP39"/>
    <property type="match status" value="1"/>
</dbReference>
<dbReference type="HAMAP" id="MF_00607">
    <property type="entry name" value="16SrRNA_methyltr_A"/>
    <property type="match status" value="1"/>
</dbReference>
<dbReference type="InterPro" id="IPR001737">
    <property type="entry name" value="KsgA/Erm"/>
</dbReference>
<dbReference type="InterPro" id="IPR023165">
    <property type="entry name" value="rRNA_Ade_diMease-like_C"/>
</dbReference>
<dbReference type="InterPro" id="IPR020596">
    <property type="entry name" value="rRNA_Ade_Mease_Trfase_CS"/>
</dbReference>
<dbReference type="InterPro" id="IPR020598">
    <property type="entry name" value="rRNA_Ade_methylase_Trfase_N"/>
</dbReference>
<dbReference type="InterPro" id="IPR011530">
    <property type="entry name" value="rRNA_adenine_dimethylase"/>
</dbReference>
<dbReference type="InterPro" id="IPR029063">
    <property type="entry name" value="SAM-dependent_MTases_sf"/>
</dbReference>
<dbReference type="NCBIfam" id="TIGR00755">
    <property type="entry name" value="ksgA"/>
    <property type="match status" value="1"/>
</dbReference>
<dbReference type="PANTHER" id="PTHR11727">
    <property type="entry name" value="DIMETHYLADENOSINE TRANSFERASE"/>
    <property type="match status" value="1"/>
</dbReference>
<dbReference type="PANTHER" id="PTHR11727:SF7">
    <property type="entry name" value="DIMETHYLADENOSINE TRANSFERASE-RELATED"/>
    <property type="match status" value="1"/>
</dbReference>
<dbReference type="Pfam" id="PF00398">
    <property type="entry name" value="RrnaAD"/>
    <property type="match status" value="1"/>
</dbReference>
<dbReference type="SMART" id="SM00650">
    <property type="entry name" value="rADc"/>
    <property type="match status" value="1"/>
</dbReference>
<dbReference type="SUPFAM" id="SSF53335">
    <property type="entry name" value="S-adenosyl-L-methionine-dependent methyltransferases"/>
    <property type="match status" value="1"/>
</dbReference>
<dbReference type="PROSITE" id="PS01131">
    <property type="entry name" value="RRNA_A_DIMETH"/>
    <property type="match status" value="1"/>
</dbReference>
<dbReference type="PROSITE" id="PS51689">
    <property type="entry name" value="SAM_RNA_A_N6_MT"/>
    <property type="match status" value="1"/>
</dbReference>
<accession>Q83AC2</accession>
<proteinExistence type="evidence at protein level"/>
<keyword id="KW-0002">3D-structure</keyword>
<keyword id="KW-0963">Cytoplasm</keyword>
<keyword id="KW-0489">Methyltransferase</keyword>
<keyword id="KW-1185">Reference proteome</keyword>
<keyword id="KW-0694">RNA-binding</keyword>
<keyword id="KW-0698">rRNA processing</keyword>
<keyword id="KW-0949">S-adenosyl-L-methionine</keyword>
<keyword id="KW-0808">Transferase</keyword>
<comment type="function">
    <text evidence="1">Specifically dimethylates two adjacent adenosines (A1518 and A1519) in the loop of a conserved hairpin near the 3'-end of 16S rRNA in the 30S particle. May play a critical role in biogenesis of 30S subunits.</text>
</comment>
<comment type="catalytic activity">
    <reaction evidence="1">
        <text>adenosine(1518)/adenosine(1519) in 16S rRNA + 4 S-adenosyl-L-methionine = N(6)-dimethyladenosine(1518)/N(6)-dimethyladenosine(1519) in 16S rRNA + 4 S-adenosyl-L-homocysteine + 4 H(+)</text>
        <dbReference type="Rhea" id="RHEA:19609"/>
        <dbReference type="Rhea" id="RHEA-COMP:10232"/>
        <dbReference type="Rhea" id="RHEA-COMP:10233"/>
        <dbReference type="ChEBI" id="CHEBI:15378"/>
        <dbReference type="ChEBI" id="CHEBI:57856"/>
        <dbReference type="ChEBI" id="CHEBI:59789"/>
        <dbReference type="ChEBI" id="CHEBI:74411"/>
        <dbReference type="ChEBI" id="CHEBI:74493"/>
        <dbReference type="EC" id="2.1.1.182"/>
    </reaction>
</comment>
<comment type="subcellular location">
    <subcellularLocation>
        <location evidence="1">Cytoplasm</location>
    </subcellularLocation>
</comment>
<comment type="similarity">
    <text evidence="1">Belongs to the class I-like SAM-binding methyltransferase superfamily. rRNA adenine N(6)-methyltransferase family. RsmA subfamily.</text>
</comment>
<protein>
    <recommendedName>
        <fullName evidence="1">Ribosomal RNA small subunit methyltransferase A</fullName>
        <ecNumber evidence="1">2.1.1.182</ecNumber>
    </recommendedName>
    <alternativeName>
        <fullName evidence="1">16S rRNA (adenine(1518)-N(6)/adenine(1519)-N(6))-dimethyltransferase</fullName>
    </alternativeName>
    <alternativeName>
        <fullName evidence="1">16S rRNA dimethyladenosine transferase</fullName>
    </alternativeName>
    <alternativeName>
        <fullName evidence="1">16S rRNA dimethylase</fullName>
    </alternativeName>
    <alternativeName>
        <fullName evidence="1">S-adenosylmethionine-6-N', N'-adenosyl(rRNA) dimethyltransferase</fullName>
    </alternativeName>
</protein>
<name>RSMA_COXBU</name>
<reference key="1">
    <citation type="journal article" date="2003" name="Proc. Natl. Acad. Sci. U.S.A.">
        <title>Complete genome sequence of the Q-fever pathogen, Coxiella burnetii.</title>
        <authorList>
            <person name="Seshadri R."/>
            <person name="Paulsen I.T."/>
            <person name="Eisen J.A."/>
            <person name="Read T.D."/>
            <person name="Nelson K.E."/>
            <person name="Nelson W.C."/>
            <person name="Ward N.L."/>
            <person name="Tettelin H."/>
            <person name="Davidsen T.M."/>
            <person name="Beanan M.J."/>
            <person name="DeBoy R.T."/>
            <person name="Daugherty S.C."/>
            <person name="Brinkac L.M."/>
            <person name="Madupu R."/>
            <person name="Dodson R.J."/>
            <person name="Khouri H.M."/>
            <person name="Lee K.H."/>
            <person name="Carty H.A."/>
            <person name="Scanlan D."/>
            <person name="Heinzen R.A."/>
            <person name="Thompson H.A."/>
            <person name="Samuel J.E."/>
            <person name="Fraser C.M."/>
            <person name="Heidelberg J.F."/>
        </authorList>
    </citation>
    <scope>NUCLEOTIDE SEQUENCE [LARGE SCALE GENOMIC DNA]</scope>
    <source>
        <strain>RSA 493 / Nine Mile phase I</strain>
    </source>
</reference>
<feature type="chain" id="PRO_0000101520" description="Ribosomal RNA small subunit methyltransferase A">
    <location>
        <begin position="1"/>
        <end position="258"/>
    </location>
</feature>
<feature type="binding site" evidence="1">
    <location>
        <position position="13"/>
    </location>
    <ligand>
        <name>S-adenosyl-L-methionine</name>
        <dbReference type="ChEBI" id="CHEBI:59789"/>
    </ligand>
</feature>
<feature type="binding site" evidence="1">
    <location>
        <position position="15"/>
    </location>
    <ligand>
        <name>S-adenosyl-L-methionine</name>
        <dbReference type="ChEBI" id="CHEBI:59789"/>
    </ligand>
</feature>
<feature type="binding site" evidence="1">
    <location>
        <position position="40"/>
    </location>
    <ligand>
        <name>S-adenosyl-L-methionine</name>
        <dbReference type="ChEBI" id="CHEBI:59789"/>
    </ligand>
</feature>
<feature type="binding site" evidence="1">
    <location>
        <position position="61"/>
    </location>
    <ligand>
        <name>S-adenosyl-L-methionine</name>
        <dbReference type="ChEBI" id="CHEBI:59789"/>
    </ligand>
</feature>
<feature type="binding site" evidence="1">
    <location>
        <position position="86"/>
    </location>
    <ligand>
        <name>S-adenosyl-L-methionine</name>
        <dbReference type="ChEBI" id="CHEBI:59789"/>
    </ligand>
</feature>
<feature type="binding site" evidence="1">
    <location>
        <position position="106"/>
    </location>
    <ligand>
        <name>S-adenosyl-L-methionine</name>
        <dbReference type="ChEBI" id="CHEBI:59789"/>
    </ligand>
</feature>
<feature type="helix" evidence="2">
    <location>
        <begin position="18"/>
        <end position="28"/>
    </location>
</feature>
<feature type="strand" evidence="2">
    <location>
        <begin position="35"/>
        <end position="39"/>
    </location>
</feature>
<feature type="turn" evidence="2">
    <location>
        <begin position="42"/>
        <end position="46"/>
    </location>
</feature>
<feature type="helix" evidence="2">
    <location>
        <begin position="47"/>
        <end position="50"/>
    </location>
</feature>
<feature type="turn" evidence="2">
    <location>
        <begin position="51"/>
        <end position="53"/>
    </location>
</feature>
<feature type="strand" evidence="2">
    <location>
        <begin position="54"/>
        <end position="61"/>
    </location>
</feature>
<feature type="helix" evidence="2">
    <location>
        <begin position="64"/>
        <end position="74"/>
    </location>
</feature>
<feature type="strand" evidence="2">
    <location>
        <begin position="80"/>
        <end position="85"/>
    </location>
</feature>
<feature type="turn" evidence="2">
    <location>
        <begin position="87"/>
        <end position="89"/>
    </location>
</feature>
<feature type="helix" evidence="2">
    <location>
        <begin position="92"/>
        <end position="94"/>
    </location>
</feature>
<feature type="strand" evidence="2">
    <location>
        <begin position="101"/>
        <end position="106"/>
    </location>
</feature>
<feature type="helix" evidence="2">
    <location>
        <begin position="109"/>
        <end position="121"/>
    </location>
</feature>
<feature type="helix" evidence="2">
    <location>
        <begin position="122"/>
        <end position="125"/>
    </location>
</feature>
<feature type="strand" evidence="2">
    <location>
        <begin position="126"/>
        <end position="134"/>
    </location>
</feature>
<feature type="helix" evidence="2">
    <location>
        <begin position="135"/>
        <end position="141"/>
    </location>
</feature>
<feature type="helix" evidence="2">
    <location>
        <begin position="152"/>
        <end position="160"/>
    </location>
</feature>
<feature type="strand" evidence="2">
    <location>
        <begin position="161"/>
        <end position="169"/>
    </location>
</feature>
<feature type="helix" evidence="2">
    <location>
        <begin position="171"/>
        <end position="173"/>
    </location>
</feature>
<feature type="strand" evidence="2">
    <location>
        <begin position="174"/>
        <end position="176"/>
    </location>
</feature>
<feature type="strand" evidence="2">
    <location>
        <begin position="182"/>
        <end position="189"/>
    </location>
</feature>
<feature type="helix" evidence="2">
    <location>
        <begin position="200"/>
        <end position="212"/>
    </location>
</feature>
<feature type="helix" evidence="2">
    <location>
        <begin position="218"/>
        <end position="221"/>
    </location>
</feature>
<feature type="turn" evidence="2">
    <location>
        <begin position="222"/>
        <end position="225"/>
    </location>
</feature>
<feature type="helix" evidence="2">
    <location>
        <begin position="228"/>
        <end position="230"/>
    </location>
</feature>
<feature type="helix" evidence="2">
    <location>
        <begin position="232"/>
        <end position="234"/>
    </location>
</feature>
<feature type="helix" evidence="2">
    <location>
        <begin position="242"/>
        <end position="244"/>
    </location>
</feature>
<feature type="helix" evidence="2">
    <location>
        <begin position="247"/>
        <end position="257"/>
    </location>
</feature>
<organism>
    <name type="scientific">Coxiella burnetii (strain RSA 493 / Nine Mile phase I)</name>
    <dbReference type="NCBI Taxonomy" id="227377"/>
    <lineage>
        <taxon>Bacteria</taxon>
        <taxon>Pseudomonadati</taxon>
        <taxon>Pseudomonadota</taxon>
        <taxon>Gammaproteobacteria</taxon>
        <taxon>Legionellales</taxon>
        <taxon>Coxiellaceae</taxon>
        <taxon>Coxiella</taxon>
    </lineage>
</organism>
<sequence>MKKMPMRKRFGQHFLHDSFVLQKIVSAIHPQKTDTLVEIGPGRGALTDYLLTECDNLALVEIDRDLVAFLQKKYNQQKNITIYQNDALQFDFSSVKTDKPLRVVGNLPYNISTPLLFHLFSQIHCIEDMHFMLQKEVVRRITAEVGSHDYGRLSVMAQYFCDNTYLFTVSPQAFTPPPRVESAIIRLIPRHNFTPVAKNLDQLSHVVKEAFSYRRKTVGNALKKLINPSQWPLLEINPQLRPQELTVEDFVKISNILN</sequence>